<protein>
    <recommendedName>
        <fullName>Virion membrane protein OPG144 precursor</fullName>
    </recommendedName>
    <alternativeName>
        <fullName>23 kDa late protein</fullName>
    </alternativeName>
    <component>
        <recommendedName>
            <fullName>Mature 21 kDa protein OPG144</fullName>
        </recommendedName>
    </component>
</protein>
<reference key="1">
    <citation type="journal article" date="1993" name="FEBS Lett.">
        <title>Genes of variola and vaccinia viruses necessary to overcome the host protective mechanisms.</title>
        <authorList>
            <person name="Shchelkunov S.N."/>
            <person name="Blinov V.M."/>
            <person name="Sandakhchiev L.S."/>
        </authorList>
    </citation>
    <scope>NUCLEOTIDE SEQUENCE [LARGE SCALE GENOMIC DNA]</scope>
</reference>
<keyword id="KW-0067">ATP-binding</keyword>
<keyword id="KW-1015">Disulfide bond</keyword>
<keyword id="KW-0238">DNA-binding</keyword>
<keyword id="KW-0347">Helicase</keyword>
<keyword id="KW-0378">Hydrolase</keyword>
<keyword id="KW-0426">Late protein</keyword>
<keyword id="KW-0472">Membrane</keyword>
<keyword id="KW-0547">Nucleotide-binding</keyword>
<keyword id="KW-0597">Phosphoprotein</keyword>
<keyword id="KW-1185">Reference proteome</keyword>
<keyword id="KW-0804">Transcription</keyword>
<keyword id="KW-0805">Transcription regulation</keyword>
<keyword id="KW-0806">Transcription termination</keyword>
<keyword id="KW-0812">Transmembrane</keyword>
<keyword id="KW-1133">Transmembrane helix</keyword>
<keyword id="KW-0261">Viral envelope protein</keyword>
<keyword id="KW-0946">Virion</keyword>
<name>PG144_VAR67</name>
<gene>
    <name type="primary">OPG144</name>
    <name type="ORF">A17L</name>
    <name type="ORF">A18L</name>
</gene>
<organismHost>
    <name type="scientific">Homo sapiens</name>
    <name type="common">Human</name>
    <dbReference type="NCBI Taxonomy" id="9606"/>
</organismHost>
<accession>P0DOR5</accession>
<accession>P16711</accession>
<accession>P68594</accession>
<organism>
    <name type="scientific">Variola virus (isolate Human/India/Ind3/1967)</name>
    <name type="common">VARV</name>
    <name type="synonym">Smallpox virus</name>
    <dbReference type="NCBI Taxonomy" id="587200"/>
    <lineage>
        <taxon>Viruses</taxon>
        <taxon>Varidnaviria</taxon>
        <taxon>Bamfordvirae</taxon>
        <taxon>Nucleocytoviricota</taxon>
        <taxon>Pokkesviricetes</taxon>
        <taxon>Chitovirales</taxon>
        <taxon>Poxviridae</taxon>
        <taxon>Chordopoxvirinae</taxon>
        <taxon>Orthopoxvirus</taxon>
        <taxon>Variola virus</taxon>
    </lineage>
</organism>
<feature type="chain" id="PRO_0000099259" description="Virion membrane protein OPG144 precursor">
    <location>
        <begin position="1"/>
        <end position="203"/>
    </location>
</feature>
<feature type="propeptide" id="PRO_0000413886" evidence="2">
    <location>
        <begin position="1"/>
        <end position="16"/>
    </location>
</feature>
<feature type="chain" id="PRO_0000413887" description="Mature 21 kDa protein OPG144" evidence="1">
    <location>
        <begin position="17"/>
        <end position="185"/>
    </location>
</feature>
<feature type="propeptide" id="PRO_0000413888" evidence="2">
    <location>
        <begin position="185"/>
        <end position="203"/>
    </location>
</feature>
<feature type="topological domain" description="Virion surface" evidence="1">
    <location>
        <begin position="1"/>
        <end position="65"/>
    </location>
</feature>
<feature type="transmembrane region" description="Helical" evidence="1">
    <location>
        <begin position="66"/>
        <end position="86"/>
    </location>
</feature>
<feature type="topological domain" description="Intravirion" evidence="1">
    <location>
        <begin position="87"/>
        <end position="138"/>
    </location>
</feature>
<feature type="transmembrane region" description="Helical" evidence="1">
    <location>
        <begin position="139"/>
        <end position="159"/>
    </location>
</feature>
<feature type="topological domain" description="Virion surface" evidence="1">
    <location>
        <begin position="160"/>
        <end position="203"/>
    </location>
</feature>
<feature type="region of interest" description="Binding to OPG125 scaffold protein" evidence="2">
    <location>
        <begin position="1"/>
        <end position="38"/>
    </location>
</feature>
<feature type="site" description="Cleavage; by OPG083 protease" evidence="2">
    <location>
        <begin position="16"/>
        <end position="17"/>
    </location>
</feature>
<feature type="site" description="Cleavage; by OPG083 protease" evidence="2">
    <location>
        <begin position="185"/>
        <end position="186"/>
    </location>
</feature>
<feature type="modified residue" description="Phosphotyrosine" evidence="2">
    <location>
        <position position="203"/>
    </location>
</feature>
<feature type="disulfide bond" evidence="2">
    <location>
        <begin position="101"/>
        <end position="121"/>
    </location>
</feature>
<feature type="disulfide bond" description="Interchain" evidence="2">
    <location>
        <position position="178"/>
    </location>
</feature>
<dbReference type="EMBL" id="X69198">
    <property type="protein sequence ID" value="CAA49062.1"/>
    <property type="molecule type" value="Genomic_DNA"/>
</dbReference>
<dbReference type="PIR" id="I36849">
    <property type="entry name" value="I36849"/>
</dbReference>
<dbReference type="RefSeq" id="NP_042165.1">
    <property type="nucleotide sequence ID" value="NC_001611.1"/>
</dbReference>
<dbReference type="GeneID" id="1486492"/>
<dbReference type="KEGG" id="vg:1486492"/>
<dbReference type="Proteomes" id="UP000002060">
    <property type="component" value="Segment"/>
</dbReference>
<dbReference type="GO" id="GO:0016020">
    <property type="term" value="C:membrane"/>
    <property type="evidence" value="ECO:0007669"/>
    <property type="project" value="UniProtKB-KW"/>
</dbReference>
<dbReference type="GO" id="GO:0019031">
    <property type="term" value="C:viral envelope"/>
    <property type="evidence" value="ECO:0007669"/>
    <property type="project" value="UniProtKB-KW"/>
</dbReference>
<dbReference type="GO" id="GO:0055036">
    <property type="term" value="C:virion membrane"/>
    <property type="evidence" value="ECO:0007669"/>
    <property type="project" value="UniProtKB-SubCell"/>
</dbReference>
<dbReference type="GO" id="GO:0005524">
    <property type="term" value="F:ATP binding"/>
    <property type="evidence" value="ECO:0007669"/>
    <property type="project" value="UniProtKB-KW"/>
</dbReference>
<dbReference type="GO" id="GO:0003677">
    <property type="term" value="F:DNA binding"/>
    <property type="evidence" value="ECO:0007669"/>
    <property type="project" value="UniProtKB-KW"/>
</dbReference>
<dbReference type="GO" id="GO:0004386">
    <property type="term" value="F:helicase activity"/>
    <property type="evidence" value="ECO:0007669"/>
    <property type="project" value="UniProtKB-KW"/>
</dbReference>
<dbReference type="GO" id="GO:0016787">
    <property type="term" value="F:hydrolase activity"/>
    <property type="evidence" value="ECO:0007669"/>
    <property type="project" value="UniProtKB-KW"/>
</dbReference>
<dbReference type="GO" id="GO:0006353">
    <property type="term" value="P:DNA-templated transcription termination"/>
    <property type="evidence" value="ECO:0007669"/>
    <property type="project" value="UniProtKB-KW"/>
</dbReference>
<dbReference type="InterPro" id="IPR007977">
    <property type="entry name" value="Poxvirus_OPG144"/>
</dbReference>
<dbReference type="Pfam" id="PF05313">
    <property type="entry name" value="Pox_P21"/>
    <property type="match status" value="1"/>
</dbReference>
<proteinExistence type="inferred from homology"/>
<evidence type="ECO:0000250" key="1"/>
<evidence type="ECO:0000250" key="2">
    <source>
        <dbReference type="UniProtKB" id="P68593"/>
    </source>
</evidence>
<evidence type="ECO:0000305" key="3"/>
<sequence length="203" mass="22999">MSYLRYYNMLDDFSAGAGVLDKDLFTEEQQQSFMPKDGGMMQNDYGGMNDYLGIFKNNDVRTLLGLILFVLALYSPPLISILMIFISSFLLPLTSLVITYCLVTQMYRGGNGNTVGMSIVCIVAAVIIMAINVFTNSQIFNIISYIILFILFFAYVMNIERQDYRRSINVTIPEQYTCNKPYTAGNKVDVDIPTFNSLNTDDY</sequence>
<comment type="function">
    <text evidence="2">Envelope protein which participates in virus morphogenesis. Needed for an early step in viral crescent membrane formation by interacting with OPG125 scaffold protein. Its interaction with OPG125 scaffold protein leads to the formation of rigid, crescent-shaped membranes that assemble around the cytoplasmic virus factory. Acts as a membrane anchor for the protein OPG154. OPG144-OPG154 virus envelope protein might be involved in fusion or attachment, and can further associate with OPG153.</text>
</comment>
<comment type="subunit">
    <text evidence="2">Homodimer; disulfide-linked. Interacts (via N-terminus) with OPG125 scaffold; this interaction helps OPG125 to associate with membranes. Interacts with OPG140. Interacts with OPG154; this interaction allows OPG154 to be anchored in the mature virion (MV) membrane. Part of a complex composed of OPG144, OPG153 and OPG154.</text>
</comment>
<comment type="subcellular location">
    <subcellularLocation>
        <location evidence="2">Virion membrane</location>
        <topology evidence="2">Multi-pass membrane protein</topology>
    </subcellularLocation>
    <text evidence="2">The 23 kDa precursor is associated with immature virions (IV) and the final 21 kDa form is present in mature virions (MV).</text>
</comment>
<comment type="PTM">
    <text evidence="2">The 23 kDa precursor is cleaved into a final 21 kDa form by the OPG083 protease during virus maturation.</text>
</comment>
<comment type="PTM">
    <text evidence="2">Phosphorylated on tyrosine and threonine. Its phosphorylation state is regulated by the OPG054 kinase and the OPG106 phosphatase. Phosphorylation by OPG054 kinase seems to be required to form the membranes associated with IV.</text>
</comment>
<comment type="PTM">
    <text evidence="2">Not glycosylated.</text>
</comment>
<comment type="similarity">
    <text evidence="3">Belongs to the orthopoxvirus OPG144 family.</text>
</comment>